<evidence type="ECO:0000255" key="1">
    <source>
        <dbReference type="HAMAP-Rule" id="MF_00578"/>
    </source>
</evidence>
<feature type="chain" id="PRO_0000192535" description="Glutamate--cysteine ligase">
    <location>
        <begin position="1"/>
        <end position="535"/>
    </location>
</feature>
<name>GSH1_PSESY</name>
<reference key="1">
    <citation type="submission" date="2003-08" db="EMBL/GenBank/DDBJ databases">
        <authorList>
            <person name="Lu S.-E."/>
            <person name="Soule J.D."/>
            <person name="Gross D.C."/>
        </authorList>
    </citation>
    <scope>NUCLEOTIDE SEQUENCE [GENOMIC DNA]</scope>
    <source>
        <strain>B301D</strain>
    </source>
</reference>
<keyword id="KW-0067">ATP-binding</keyword>
<keyword id="KW-0317">Glutathione biosynthesis</keyword>
<keyword id="KW-0436">Ligase</keyword>
<keyword id="KW-0547">Nucleotide-binding</keyword>
<dbReference type="EC" id="6.3.2.2" evidence="1"/>
<dbReference type="EMBL" id="AY374326">
    <property type="protein sequence ID" value="AAQ82441.1"/>
    <property type="molecule type" value="Genomic_DNA"/>
</dbReference>
<dbReference type="SMR" id="P61379"/>
<dbReference type="PATRIC" id="fig|321.64.peg.3982"/>
<dbReference type="UniPathway" id="UPA00142">
    <property type="reaction ID" value="UER00209"/>
</dbReference>
<dbReference type="GO" id="GO:0005829">
    <property type="term" value="C:cytosol"/>
    <property type="evidence" value="ECO:0007669"/>
    <property type="project" value="TreeGrafter"/>
</dbReference>
<dbReference type="GO" id="GO:0005524">
    <property type="term" value="F:ATP binding"/>
    <property type="evidence" value="ECO:0007669"/>
    <property type="project" value="UniProtKB-KW"/>
</dbReference>
<dbReference type="GO" id="GO:0004357">
    <property type="term" value="F:glutamate-cysteine ligase activity"/>
    <property type="evidence" value="ECO:0007669"/>
    <property type="project" value="UniProtKB-UniRule"/>
</dbReference>
<dbReference type="GO" id="GO:0046872">
    <property type="term" value="F:metal ion binding"/>
    <property type="evidence" value="ECO:0007669"/>
    <property type="project" value="TreeGrafter"/>
</dbReference>
<dbReference type="GO" id="GO:0006750">
    <property type="term" value="P:glutathione biosynthetic process"/>
    <property type="evidence" value="ECO:0007669"/>
    <property type="project" value="UniProtKB-UniRule"/>
</dbReference>
<dbReference type="Gene3D" id="3.30.590.20">
    <property type="match status" value="1"/>
</dbReference>
<dbReference type="HAMAP" id="MF_00578">
    <property type="entry name" value="Glu_cys_ligase"/>
    <property type="match status" value="1"/>
</dbReference>
<dbReference type="InterPro" id="IPR014746">
    <property type="entry name" value="Gln_synth/guanido_kin_cat_dom"/>
</dbReference>
<dbReference type="InterPro" id="IPR007370">
    <property type="entry name" value="Glu_cys_ligase"/>
</dbReference>
<dbReference type="InterPro" id="IPR006334">
    <property type="entry name" value="Glut_cys_ligase"/>
</dbReference>
<dbReference type="NCBIfam" id="TIGR01434">
    <property type="entry name" value="glu_cys_ligase"/>
    <property type="match status" value="1"/>
</dbReference>
<dbReference type="PANTHER" id="PTHR38761">
    <property type="entry name" value="GLUTAMATE--CYSTEINE LIGASE"/>
    <property type="match status" value="1"/>
</dbReference>
<dbReference type="PANTHER" id="PTHR38761:SF1">
    <property type="entry name" value="GLUTAMATE--CYSTEINE LIGASE"/>
    <property type="match status" value="1"/>
</dbReference>
<dbReference type="Pfam" id="PF04262">
    <property type="entry name" value="Glu_cys_ligase"/>
    <property type="match status" value="1"/>
</dbReference>
<dbReference type="SUPFAM" id="SSF55931">
    <property type="entry name" value="Glutamine synthetase/guanido kinase"/>
    <property type="match status" value="1"/>
</dbReference>
<gene>
    <name evidence="1" type="primary">gshA</name>
</gene>
<protein>
    <recommendedName>
        <fullName evidence="1">Glutamate--cysteine ligase</fullName>
        <ecNumber evidence="1">6.3.2.2</ecNumber>
    </recommendedName>
    <alternativeName>
        <fullName evidence="1">Gamma-ECS</fullName>
        <shortName evidence="1">GCS</shortName>
    </alternativeName>
    <alternativeName>
        <fullName evidence="1">Gamma-glutamylcysteine synthetase</fullName>
    </alternativeName>
</protein>
<accession>P61379</accession>
<sequence>MKDYTLSEFLNRRLALLGERNNLSLLEQCLHGIERECLRVTATAELACTPHPQALGAALTNGQVTTDYSESLLEFITPALKNPAETIDNLDRIHRFVYSKLGDELLWSPSMPCPLPDEEHIPIAYYGTSNIGKLKYVYRKGLALRYGKTMQCIAGIHYNFSLPEDAWALLKQTEDFAGDARDYQSHSYIALIRNFRRYSWLLMYLFGASPALDAGFLRGRKHQLEQHFDADTLYLPYATSLRMSDLGYQSDAQADLTPCYNDLVSYTDSLRKAVATPYKPYVEVGTHDQNGEWVQLNTNVLQIENEYYSNIRPKRVTYSGERPIQALVARGVQYVEVRCLDINPFLPTGISLEQSRFIDAFVLYCALEESQQLARHECSNASSNFLSVVKEGRRPGLSLMRDNRPVDLKIWATELMEKITPIARLLDQAQGTDEHLKSIAVQQAKIDDTALTPSAQVLASMEAHNEGFTAFSLRQSQVHAEYFRTHPLSAQEQADFEAQAKTSIEEQAELEATEEVVDFDTFVGSYQASILSISN</sequence>
<proteinExistence type="inferred from homology"/>
<comment type="catalytic activity">
    <reaction evidence="1">
        <text>L-cysteine + L-glutamate + ATP = gamma-L-glutamyl-L-cysteine + ADP + phosphate + H(+)</text>
        <dbReference type="Rhea" id="RHEA:13285"/>
        <dbReference type="ChEBI" id="CHEBI:15378"/>
        <dbReference type="ChEBI" id="CHEBI:29985"/>
        <dbReference type="ChEBI" id="CHEBI:30616"/>
        <dbReference type="ChEBI" id="CHEBI:35235"/>
        <dbReference type="ChEBI" id="CHEBI:43474"/>
        <dbReference type="ChEBI" id="CHEBI:58173"/>
        <dbReference type="ChEBI" id="CHEBI:456216"/>
        <dbReference type="EC" id="6.3.2.2"/>
    </reaction>
</comment>
<comment type="pathway">
    <text evidence="1">Sulfur metabolism; glutathione biosynthesis; glutathione from L-cysteine and L-glutamate: step 1/2.</text>
</comment>
<comment type="similarity">
    <text evidence="1">Belongs to the glutamate--cysteine ligase type 1 family. Type 1 subfamily.</text>
</comment>
<organism>
    <name type="scientific">Pseudomonas syringae pv. syringae</name>
    <dbReference type="NCBI Taxonomy" id="321"/>
    <lineage>
        <taxon>Bacteria</taxon>
        <taxon>Pseudomonadati</taxon>
        <taxon>Pseudomonadota</taxon>
        <taxon>Gammaproteobacteria</taxon>
        <taxon>Pseudomonadales</taxon>
        <taxon>Pseudomonadaceae</taxon>
        <taxon>Pseudomonas</taxon>
        <taxon>Pseudomonas syringae</taxon>
    </lineage>
</organism>